<comment type="function">
    <text evidence="4">O-Mevalon transferase yanI; part of the gene cluster that mediates the biosynthesis of yanuthone D, a fungal isoprenoid epoxycyclohexenone that acts as an antibiotic against fungi and bacteria (PubMed:24684908). The first step of the pathway is the synthesis of 6-methylsalicylic acid (6-MSA) by the polyketide synthase yanA (PubMed:24684908). 6-MSA is then converted to m-cresol by the decarboxylase yanB (PubMed:24684908). The cytochrome P450 monooxygenase yanC then catalyzes the oxidation of m-cresol to toluquinol (PubMed:24684908). Epoxidation of toluquinol is then performed by the short chain dehydrogenase yanD, with the help of yanE, and a further prenylation by yanG leads to 7-deacetoxyyanuthone A (PubMed:24684908). The next step is the hydroxylation of C-22 of 7-deacetoxyyanuthone A by the cytochrome P450 monooxygenase yanH to yield 22-deacetylyanuthone A (PubMed:24684908). O-Mevalon transferase yanI then attaches mevalon to the hydroxyl group of 22-deacetylyanuthone A to produce yanuthone E (PubMed:24684908). Finally, the FAD-dependent monooxygenase yanF oxidizes the hydroxyl group at C15 of yanuthone E to form yanuthone D (PubMed:24684908). Furthermore, several branching points in the pathway lead to the production of yanuthones F and G from 7-deacetoxyyanuthone A; yanuthones H and I from 22-deacetylyanuthone A; and yanuthone J from yanuthone E (PubMed:24684908).</text>
</comment>
<comment type="pathway">
    <text evidence="4">Secondary metabolite biosynthesis; terpenoid biosynthesis.</text>
</comment>
<comment type="subcellular location">
    <subcellularLocation>
        <location evidence="1">Membrane</location>
        <topology evidence="1">Multi-pass membrane protein</topology>
    </subcellularLocation>
</comment>
<comment type="disruption phenotype">
    <text evidence="4">Loses the ability to produce yanuthone D, but accumulates 7-deacetoxyyanuthone A and 22-deacetylyanuthone A as well as two derivatives called yanuthone H and yanuthone I (PubMed:24684908).</text>
</comment>
<comment type="biotechnology">
    <text evidence="3">Yanuthone D is an antibiotic against C.albicans, methicillin-resistant S.aureus (MRSA), and vancomycin-resistant Enterococcus (PubMed:11031048).</text>
</comment>
<comment type="similarity">
    <text evidence="6">Belongs to the wax synthase family.</text>
</comment>
<name>YANI_ASPNA</name>
<dbReference type="EC" id="2.-.-.-" evidence="7"/>
<dbReference type="EMBL" id="ACJE01000012">
    <property type="protein sequence ID" value="EHA22198.1"/>
    <property type="molecule type" value="Genomic_DNA"/>
</dbReference>
<dbReference type="STRING" id="380704.G3Y421"/>
<dbReference type="GlyCosmos" id="G3Y421">
    <property type="glycosylation" value="1 site, No reported glycans"/>
</dbReference>
<dbReference type="VEuPathDB" id="FungiDB:ASPNIDRAFT2_1165671"/>
<dbReference type="HOGENOM" id="CLU_032731_1_1_1"/>
<dbReference type="OrthoDB" id="100475at5052"/>
<dbReference type="UniPathway" id="UPA00213"/>
<dbReference type="Proteomes" id="UP000009038">
    <property type="component" value="Unassembled WGS sequence"/>
</dbReference>
<dbReference type="GO" id="GO:0016020">
    <property type="term" value="C:membrane"/>
    <property type="evidence" value="ECO:0007669"/>
    <property type="project" value="UniProtKB-SubCell"/>
</dbReference>
<dbReference type="GO" id="GO:0008374">
    <property type="term" value="F:O-acyltransferase activity"/>
    <property type="evidence" value="ECO:0007669"/>
    <property type="project" value="InterPro"/>
</dbReference>
<dbReference type="GO" id="GO:0016114">
    <property type="term" value="P:terpenoid biosynthetic process"/>
    <property type="evidence" value="ECO:0007669"/>
    <property type="project" value="UniProtKB-UniPathway"/>
</dbReference>
<dbReference type="InterPro" id="IPR044851">
    <property type="entry name" value="Wax_synthase"/>
</dbReference>
<dbReference type="InterPro" id="IPR032805">
    <property type="entry name" value="Wax_synthase_dom"/>
</dbReference>
<dbReference type="PANTHER" id="PTHR31595">
    <property type="entry name" value="LONG-CHAIN-ALCOHOL O-FATTY-ACYLTRANSFERASE 3-RELATED"/>
    <property type="match status" value="1"/>
</dbReference>
<dbReference type="PANTHER" id="PTHR31595:SF57">
    <property type="entry name" value="OS04G0481900 PROTEIN"/>
    <property type="match status" value="1"/>
</dbReference>
<dbReference type="Pfam" id="PF13813">
    <property type="entry name" value="MBOAT_2"/>
    <property type="match status" value="1"/>
</dbReference>
<sequence>MNGSNLEHRIPALPHLGFGDVLLSHSLASTHYTVLAFLLAVCIPSAPRKSILRYGLLLLQITCALQAFVAPPPPTSDSAVLYTSGVLMANLLARYFDRLYTTVPEESFHRITSTKPESREDATKLPITQRLPWALELFSVTRGIGWNWRVSGIPKSTAPKSRSRFVTAQLLTIIAMYAGLYLVEVTCQGLLASYSSPGTTNANAVQTLAGNLVMYALIVLGLALVVYSHFALFVLPLSILCVGLQVGPVAWRDMSAWPPDYGSLWEAYSLRRFWGITWHQQLRRHTGAPAAYLFSFLPDAVRTSKRRSARLTRRYMLMLITFVISGLIHTSGSYHVSRGLGLPLSYGGEVKYFISQAISIMIEDFGCWLLRIDDRSAGEASTVRRWVGYIVTAGWYFWSRVHWSVMPVALASGIQDERGPLFIALEHTRRSAAAVPGNFAAKAWKITP</sequence>
<gene>
    <name evidence="5" type="primary">yanI</name>
    <name type="ORF">ASPNIDRAFT_44967</name>
</gene>
<organism>
    <name type="scientific">Aspergillus niger (strain ATCC 1015 / CBS 113.46 / FGSC A1144 / LSHB Ac4 / NCTC 3858a / NRRL 328 / USDA 3528.7)</name>
    <dbReference type="NCBI Taxonomy" id="380704"/>
    <lineage>
        <taxon>Eukaryota</taxon>
        <taxon>Fungi</taxon>
        <taxon>Dikarya</taxon>
        <taxon>Ascomycota</taxon>
        <taxon>Pezizomycotina</taxon>
        <taxon>Eurotiomycetes</taxon>
        <taxon>Eurotiomycetidae</taxon>
        <taxon>Eurotiales</taxon>
        <taxon>Aspergillaceae</taxon>
        <taxon>Aspergillus</taxon>
        <taxon>Aspergillus subgen. Circumdati</taxon>
    </lineage>
</organism>
<feature type="chain" id="PRO_0000436770" description="O-Mevalon transferase yanI">
    <location>
        <begin position="1"/>
        <end position="448"/>
    </location>
</feature>
<feature type="transmembrane region" description="Helical" evidence="1">
    <location>
        <begin position="21"/>
        <end position="41"/>
    </location>
</feature>
<feature type="transmembrane region" description="Helical" evidence="1">
    <location>
        <begin position="54"/>
        <end position="74"/>
    </location>
</feature>
<feature type="transmembrane region" description="Helical" evidence="1">
    <location>
        <begin position="79"/>
        <end position="96"/>
    </location>
</feature>
<feature type="transmembrane region" description="Helical" evidence="1">
    <location>
        <begin position="165"/>
        <end position="185"/>
    </location>
</feature>
<feature type="transmembrane region" description="Helical" evidence="1">
    <location>
        <begin position="217"/>
        <end position="237"/>
    </location>
</feature>
<feature type="transmembrane region" description="Helical" evidence="1">
    <location>
        <begin position="316"/>
        <end position="336"/>
    </location>
</feature>
<feature type="transmembrane region" description="Helical" evidence="1">
    <location>
        <begin position="350"/>
        <end position="370"/>
    </location>
</feature>
<feature type="transmembrane region" description="Helical" evidence="1">
    <location>
        <begin position="390"/>
        <end position="410"/>
    </location>
</feature>
<feature type="glycosylation site" description="N-linked (GlcNAc...) asparagine" evidence="2">
    <location>
        <position position="2"/>
    </location>
</feature>
<protein>
    <recommendedName>
        <fullName evidence="5">O-Mevalon transferase yanI</fullName>
        <ecNumber evidence="7">2.-.-.-</ecNumber>
    </recommendedName>
    <alternativeName>
        <fullName evidence="5">Yanuthone D biosynthesis cluster protein I</fullName>
    </alternativeName>
</protein>
<accession>G3Y421</accession>
<evidence type="ECO:0000255" key="1"/>
<evidence type="ECO:0000255" key="2">
    <source>
        <dbReference type="PROSITE-ProRule" id="PRU00498"/>
    </source>
</evidence>
<evidence type="ECO:0000269" key="3">
    <source>
    </source>
</evidence>
<evidence type="ECO:0000269" key="4">
    <source>
    </source>
</evidence>
<evidence type="ECO:0000303" key="5">
    <source>
    </source>
</evidence>
<evidence type="ECO:0000305" key="6"/>
<evidence type="ECO:0000305" key="7">
    <source>
    </source>
</evidence>
<proteinExistence type="evidence at protein level"/>
<reference key="1">
    <citation type="journal article" date="2011" name="Genome Res.">
        <title>Comparative genomics of citric-acid-producing Aspergillus niger ATCC 1015 versus enzyme-producing CBS 513.88.</title>
        <authorList>
            <person name="Andersen M.R."/>
            <person name="Salazar M.P."/>
            <person name="Schaap P.J."/>
            <person name="van de Vondervoort P.J.I."/>
            <person name="Culley D."/>
            <person name="Thykaer J."/>
            <person name="Frisvad J.C."/>
            <person name="Nielsen K.F."/>
            <person name="Albang R."/>
            <person name="Albermann K."/>
            <person name="Berka R.M."/>
            <person name="Braus G.H."/>
            <person name="Braus-Stromeyer S.A."/>
            <person name="Corrochano L.M."/>
            <person name="Dai Z."/>
            <person name="van Dijck P.W.M."/>
            <person name="Hofmann G."/>
            <person name="Lasure L.L."/>
            <person name="Magnuson J.K."/>
            <person name="Menke H."/>
            <person name="Meijer M."/>
            <person name="Meijer S.L."/>
            <person name="Nielsen J.B."/>
            <person name="Nielsen M.L."/>
            <person name="van Ooyen A.J.J."/>
            <person name="Pel H.J."/>
            <person name="Poulsen L."/>
            <person name="Samson R.A."/>
            <person name="Stam H."/>
            <person name="Tsang A."/>
            <person name="van den Brink J.M."/>
            <person name="Atkins A."/>
            <person name="Aerts A."/>
            <person name="Shapiro H."/>
            <person name="Pangilinan J."/>
            <person name="Salamov A."/>
            <person name="Lou Y."/>
            <person name="Lindquist E."/>
            <person name="Lucas S."/>
            <person name="Grimwood J."/>
            <person name="Grigoriev I.V."/>
            <person name="Kubicek C.P."/>
            <person name="Martinez D."/>
            <person name="van Peij N.N.M.E."/>
            <person name="Roubos J.A."/>
            <person name="Nielsen J."/>
            <person name="Baker S.E."/>
        </authorList>
    </citation>
    <scope>NUCLEOTIDE SEQUENCE [LARGE SCALE GENOMIC DNA]</scope>
    <source>
        <strain>ATCC 1015 / CBS 113.46 / FGSC A1144 / LSHB Ac4 / NCTC 3858a / NRRL 328 / USDA 3528.7</strain>
    </source>
</reference>
<reference key="2">
    <citation type="journal article" date="2000" name="J. Org. Chem.">
        <title>Yanuthones: novel metabolites from a marine isolate of Aspergillus niger.</title>
        <authorList>
            <person name="Bugni T.S."/>
            <person name="Abbanat D."/>
            <person name="Bernan V.S."/>
            <person name="Maiese W.M."/>
            <person name="Greenstein M."/>
            <person name="Van Wagoner R.M."/>
            <person name="Ireland C.M."/>
        </authorList>
    </citation>
    <scope>BIOTECHNOLOGY</scope>
</reference>
<reference key="3">
    <citation type="journal article" date="2014" name="Chem. Biol.">
        <title>Molecular and chemical characterization of the biosynthesis of the 6-MSA-derived meroterpenoid yanuthone D in Aspergillus niger.</title>
        <authorList>
            <person name="Holm D.K."/>
            <person name="Petersen L.M."/>
            <person name="Klitgaard A."/>
            <person name="Knudsen P.B."/>
            <person name="Jarczynska Z.D."/>
            <person name="Nielsen K.F."/>
            <person name="Gotfredsen C.H."/>
            <person name="Larsen T.O."/>
            <person name="Mortensen U.H."/>
        </authorList>
    </citation>
    <scope>FUNCTION</scope>
    <scope>DISRUPTION PHENOTYPE</scope>
</reference>
<keyword id="KW-0325">Glycoprotein</keyword>
<keyword id="KW-0472">Membrane</keyword>
<keyword id="KW-0808">Transferase</keyword>
<keyword id="KW-0812">Transmembrane</keyword>
<keyword id="KW-1133">Transmembrane helix</keyword>